<organism>
    <name type="scientific">Burkholderia cenocepacia (strain HI2424)</name>
    <dbReference type="NCBI Taxonomy" id="331272"/>
    <lineage>
        <taxon>Bacteria</taxon>
        <taxon>Pseudomonadati</taxon>
        <taxon>Pseudomonadota</taxon>
        <taxon>Betaproteobacteria</taxon>
        <taxon>Burkholderiales</taxon>
        <taxon>Burkholderiaceae</taxon>
        <taxon>Burkholderia</taxon>
        <taxon>Burkholderia cepacia complex</taxon>
    </lineage>
</organism>
<accession>A0AXY5</accession>
<name>CH602_BURCH</name>
<dbReference type="EC" id="5.6.1.7" evidence="1"/>
<dbReference type="EMBL" id="CP000459">
    <property type="protein sequence ID" value="ABK10261.1"/>
    <property type="molecule type" value="Genomic_DNA"/>
</dbReference>
<dbReference type="SMR" id="A0AXY5"/>
<dbReference type="KEGG" id="bch:Bcen2424_3522"/>
<dbReference type="HOGENOM" id="CLU_016503_3_0_4"/>
<dbReference type="GO" id="GO:0005737">
    <property type="term" value="C:cytoplasm"/>
    <property type="evidence" value="ECO:0007669"/>
    <property type="project" value="UniProtKB-SubCell"/>
</dbReference>
<dbReference type="GO" id="GO:0005524">
    <property type="term" value="F:ATP binding"/>
    <property type="evidence" value="ECO:0007669"/>
    <property type="project" value="UniProtKB-UniRule"/>
</dbReference>
<dbReference type="GO" id="GO:0140662">
    <property type="term" value="F:ATP-dependent protein folding chaperone"/>
    <property type="evidence" value="ECO:0007669"/>
    <property type="project" value="InterPro"/>
</dbReference>
<dbReference type="GO" id="GO:0016853">
    <property type="term" value="F:isomerase activity"/>
    <property type="evidence" value="ECO:0007669"/>
    <property type="project" value="UniProtKB-KW"/>
</dbReference>
<dbReference type="GO" id="GO:0051082">
    <property type="term" value="F:unfolded protein binding"/>
    <property type="evidence" value="ECO:0007669"/>
    <property type="project" value="UniProtKB-UniRule"/>
</dbReference>
<dbReference type="GO" id="GO:0042026">
    <property type="term" value="P:protein refolding"/>
    <property type="evidence" value="ECO:0007669"/>
    <property type="project" value="UniProtKB-UniRule"/>
</dbReference>
<dbReference type="CDD" id="cd03344">
    <property type="entry name" value="GroEL"/>
    <property type="match status" value="1"/>
</dbReference>
<dbReference type="FunFam" id="3.50.7.10:FF:000001">
    <property type="entry name" value="60 kDa chaperonin"/>
    <property type="match status" value="1"/>
</dbReference>
<dbReference type="Gene3D" id="3.50.7.10">
    <property type="entry name" value="GroEL"/>
    <property type="match status" value="1"/>
</dbReference>
<dbReference type="Gene3D" id="1.10.560.10">
    <property type="entry name" value="GroEL-like equatorial domain"/>
    <property type="match status" value="1"/>
</dbReference>
<dbReference type="Gene3D" id="3.30.260.10">
    <property type="entry name" value="TCP-1-like chaperonin intermediate domain"/>
    <property type="match status" value="1"/>
</dbReference>
<dbReference type="HAMAP" id="MF_00600">
    <property type="entry name" value="CH60"/>
    <property type="match status" value="1"/>
</dbReference>
<dbReference type="InterPro" id="IPR018370">
    <property type="entry name" value="Chaperonin_Cpn60_CS"/>
</dbReference>
<dbReference type="InterPro" id="IPR001844">
    <property type="entry name" value="Cpn60/GroEL"/>
</dbReference>
<dbReference type="InterPro" id="IPR002423">
    <property type="entry name" value="Cpn60/GroEL/TCP-1"/>
</dbReference>
<dbReference type="InterPro" id="IPR027409">
    <property type="entry name" value="GroEL-like_apical_dom_sf"/>
</dbReference>
<dbReference type="InterPro" id="IPR027413">
    <property type="entry name" value="GROEL-like_equatorial_sf"/>
</dbReference>
<dbReference type="InterPro" id="IPR027410">
    <property type="entry name" value="TCP-1-like_intermed_sf"/>
</dbReference>
<dbReference type="NCBIfam" id="TIGR02348">
    <property type="entry name" value="GroEL"/>
    <property type="match status" value="1"/>
</dbReference>
<dbReference type="NCBIfam" id="NF000592">
    <property type="entry name" value="PRK00013.1"/>
    <property type="match status" value="1"/>
</dbReference>
<dbReference type="NCBIfam" id="NF009487">
    <property type="entry name" value="PRK12849.1"/>
    <property type="match status" value="1"/>
</dbReference>
<dbReference type="NCBIfam" id="NF009488">
    <property type="entry name" value="PRK12850.1"/>
    <property type="match status" value="1"/>
</dbReference>
<dbReference type="NCBIfam" id="NF009489">
    <property type="entry name" value="PRK12851.1"/>
    <property type="match status" value="1"/>
</dbReference>
<dbReference type="PANTHER" id="PTHR45633">
    <property type="entry name" value="60 KDA HEAT SHOCK PROTEIN, MITOCHONDRIAL"/>
    <property type="match status" value="1"/>
</dbReference>
<dbReference type="Pfam" id="PF00118">
    <property type="entry name" value="Cpn60_TCP1"/>
    <property type="match status" value="1"/>
</dbReference>
<dbReference type="PRINTS" id="PR00298">
    <property type="entry name" value="CHAPERONIN60"/>
</dbReference>
<dbReference type="SUPFAM" id="SSF52029">
    <property type="entry name" value="GroEL apical domain-like"/>
    <property type="match status" value="1"/>
</dbReference>
<dbReference type="SUPFAM" id="SSF48592">
    <property type="entry name" value="GroEL equatorial domain-like"/>
    <property type="match status" value="1"/>
</dbReference>
<dbReference type="SUPFAM" id="SSF54849">
    <property type="entry name" value="GroEL-intermediate domain like"/>
    <property type="match status" value="1"/>
</dbReference>
<dbReference type="PROSITE" id="PS00296">
    <property type="entry name" value="CHAPERONINS_CPN60"/>
    <property type="match status" value="1"/>
</dbReference>
<reference key="1">
    <citation type="submission" date="2006-08" db="EMBL/GenBank/DDBJ databases">
        <title>Complete sequence of chromosome 2 of Burkholderia cenocepacia HI2424.</title>
        <authorList>
            <person name="Copeland A."/>
            <person name="Lucas S."/>
            <person name="Lapidus A."/>
            <person name="Barry K."/>
            <person name="Detter J.C."/>
            <person name="Glavina del Rio T."/>
            <person name="Hammon N."/>
            <person name="Israni S."/>
            <person name="Pitluck S."/>
            <person name="Chain P."/>
            <person name="Malfatti S."/>
            <person name="Shin M."/>
            <person name="Vergez L."/>
            <person name="Schmutz J."/>
            <person name="Larimer F."/>
            <person name="Land M."/>
            <person name="Hauser L."/>
            <person name="Kyrpides N."/>
            <person name="Kim E."/>
            <person name="LiPuma J.J."/>
            <person name="Gonzalez C.F."/>
            <person name="Konstantinidis K."/>
            <person name="Tiedje J.M."/>
            <person name="Richardson P."/>
        </authorList>
    </citation>
    <scope>NUCLEOTIDE SEQUENCE [LARGE SCALE GENOMIC DNA]</scope>
    <source>
        <strain>HI2424</strain>
    </source>
</reference>
<comment type="function">
    <text evidence="1">Together with its co-chaperonin GroES, plays an essential role in assisting protein folding. The GroEL-GroES system forms a nano-cage that allows encapsulation of the non-native substrate proteins and provides a physical environment optimized to promote and accelerate protein folding.</text>
</comment>
<comment type="catalytic activity">
    <reaction evidence="1">
        <text>ATP + H2O + a folded polypeptide = ADP + phosphate + an unfolded polypeptide.</text>
        <dbReference type="EC" id="5.6.1.7"/>
    </reaction>
</comment>
<comment type="subunit">
    <text evidence="1">Forms a cylinder of 14 subunits composed of two heptameric rings stacked back-to-back. Interacts with the co-chaperonin GroES.</text>
</comment>
<comment type="subcellular location">
    <subcellularLocation>
        <location evidence="1">Cytoplasm</location>
    </subcellularLocation>
</comment>
<comment type="similarity">
    <text evidence="1">Belongs to the chaperonin (HSP60) family.</text>
</comment>
<gene>
    <name evidence="1" type="primary">groEL2</name>
    <name evidence="1" type="synonym">groL2</name>
    <name type="ordered locus">Bcen2424_3522</name>
</gene>
<proteinExistence type="inferred from homology"/>
<evidence type="ECO:0000255" key="1">
    <source>
        <dbReference type="HAMAP-Rule" id="MF_00600"/>
    </source>
</evidence>
<protein>
    <recommendedName>
        <fullName evidence="1">Chaperonin GroEL 2</fullName>
        <ecNumber evidence="1">5.6.1.7</ecNumber>
    </recommendedName>
    <alternativeName>
        <fullName evidence="1">60 kDa chaperonin 2</fullName>
    </alternativeName>
    <alternativeName>
        <fullName evidence="1">Chaperonin-60 2</fullName>
        <shortName evidence="1">Cpn60 2</shortName>
    </alternativeName>
</protein>
<sequence length="546" mass="57355">MAAKEILFSDIARSKLTEGVNILANAVKVTLGPKGRNVVLERSFGAPVVTKDGVSVAKEIELADKLQNIGAQLVKEVASRTSDAAGDGTTTATVLAQAIVREGQKYVAAGLNPLDLKRGIDKAVASAVEELKKISKPTTTSKEIAQVATISANGEESIGQRIAEAIDRVGKEGVITVEDGKSLADELDVVEGLQFDRGYLSPYFINNPDKQIAEIESPYILLHDKKISNIRDLLPVLEQVAKSGRPLLIIAEDVEGEALATLVVNNIRGILKTVAVKAPGFGDRRKALLEDIAILTGGQVIAEETGLTLEKTTLAELGQAKRIEVGKENTTVIDGAGDAKNIEARVKQIRVQIEEATSDYDREKLQERVAKLAGGVAVIKVGGATEIEVKEKKDRVDDALHATRAAVEEGIVPGGGVALIRVRQAIRELKGANADQDAGIKIVLRALEEPLRQIVTNAGEEASVVVAKVAEGTGNFGYNAQTGEYGDLVESGVLDPTKVTRTALQNAASVAGLLLTTDATVYEAPKDAAPAAAPGGPGAGGPGFDF</sequence>
<keyword id="KW-0067">ATP-binding</keyword>
<keyword id="KW-0143">Chaperone</keyword>
<keyword id="KW-0963">Cytoplasm</keyword>
<keyword id="KW-0413">Isomerase</keyword>
<keyword id="KW-0547">Nucleotide-binding</keyword>
<feature type="chain" id="PRO_0000331982" description="Chaperonin GroEL 2">
    <location>
        <begin position="1"/>
        <end position="546"/>
    </location>
</feature>
<feature type="binding site" evidence="1">
    <location>
        <begin position="30"/>
        <end position="33"/>
    </location>
    <ligand>
        <name>ATP</name>
        <dbReference type="ChEBI" id="CHEBI:30616"/>
    </ligand>
</feature>
<feature type="binding site" evidence="1">
    <location>
        <position position="51"/>
    </location>
    <ligand>
        <name>ATP</name>
        <dbReference type="ChEBI" id="CHEBI:30616"/>
    </ligand>
</feature>
<feature type="binding site" evidence="1">
    <location>
        <begin position="87"/>
        <end position="91"/>
    </location>
    <ligand>
        <name>ATP</name>
        <dbReference type="ChEBI" id="CHEBI:30616"/>
    </ligand>
</feature>
<feature type="binding site" evidence="1">
    <location>
        <position position="415"/>
    </location>
    <ligand>
        <name>ATP</name>
        <dbReference type="ChEBI" id="CHEBI:30616"/>
    </ligand>
</feature>
<feature type="binding site" evidence="1">
    <location>
        <position position="495"/>
    </location>
    <ligand>
        <name>ATP</name>
        <dbReference type="ChEBI" id="CHEBI:30616"/>
    </ligand>
</feature>